<keyword id="KW-0067">ATP-binding</keyword>
<keyword id="KW-0156">Chromatin regulator</keyword>
<keyword id="KW-0227">DNA damage</keyword>
<keyword id="KW-0234">DNA repair</keyword>
<keyword id="KW-0347">Helicase</keyword>
<keyword id="KW-0378">Hydrolase</keyword>
<keyword id="KW-0547">Nucleotide-binding</keyword>
<keyword id="KW-0539">Nucleus</keyword>
<keyword id="KW-1185">Reference proteome</keyword>
<keyword id="KW-0678">Repressor</keyword>
<keyword id="KW-0804">Transcription</keyword>
<keyword id="KW-0805">Transcription regulation</keyword>
<comment type="function">
    <text evidence="1">Acts as a transcriptional coactivator in Wg signaling.</text>
</comment>
<comment type="function">
    <text evidence="1">Proposed core component of the chromatin remodeling Ino80 complex which is involved in transcriptional regulation, DNA replication and probably DNA repair.</text>
</comment>
<comment type="catalytic activity">
    <reaction>
        <text>ATP + H2O = ADP + phosphate + H(+)</text>
        <dbReference type="Rhea" id="RHEA:13065"/>
        <dbReference type="ChEBI" id="CHEBI:15377"/>
        <dbReference type="ChEBI" id="CHEBI:15378"/>
        <dbReference type="ChEBI" id="CHEBI:30616"/>
        <dbReference type="ChEBI" id="CHEBI:43474"/>
        <dbReference type="ChEBI" id="CHEBI:456216"/>
        <dbReference type="EC" id="3.6.4.12"/>
    </reaction>
</comment>
<comment type="subunit">
    <text evidence="1 4">Forms homohexameric rings (Probable). May form a dodecamer with pont made of two stacked hexameric rings. Component of the chromatin remodeling Ino80 complex (By similarity).</text>
</comment>
<comment type="subcellular location">
    <subcellularLocation>
        <location evidence="2">Nucleus</location>
    </subcellularLocation>
</comment>
<comment type="similarity">
    <text evidence="4">Belongs to the RuvB family.</text>
</comment>
<dbReference type="EC" id="3.6.4.12"/>
<dbReference type="EMBL" id="CH477657">
    <property type="protein sequence ID" value="EAT37687.1"/>
    <property type="molecule type" value="Genomic_DNA"/>
</dbReference>
<dbReference type="SMR" id="Q16TA2"/>
<dbReference type="FunCoup" id="Q16TA2">
    <property type="interactions" value="1987"/>
</dbReference>
<dbReference type="STRING" id="7159.Q16TA2"/>
<dbReference type="PaxDb" id="7159-AAEL010341-PA"/>
<dbReference type="EnsemblMetazoa" id="AAEL010341-RA">
    <property type="protein sequence ID" value="AAEL010341-PA"/>
    <property type="gene ID" value="AAEL010341"/>
</dbReference>
<dbReference type="GeneID" id="5573243"/>
<dbReference type="KEGG" id="aag:5573243"/>
<dbReference type="CTD" id="40092"/>
<dbReference type="VEuPathDB" id="VectorBase:AAEL010341"/>
<dbReference type="eggNOG" id="KOG2680">
    <property type="taxonomic scope" value="Eukaryota"/>
</dbReference>
<dbReference type="HOGENOM" id="CLU_028311_4_0_1"/>
<dbReference type="InParanoid" id="Q16TA2"/>
<dbReference type="OMA" id="IINTEPY"/>
<dbReference type="OrthoDB" id="10060499at2759"/>
<dbReference type="PhylomeDB" id="Q16TA2"/>
<dbReference type="Proteomes" id="UP000008820">
    <property type="component" value="Chromosome 2"/>
</dbReference>
<dbReference type="Proteomes" id="UP000682892">
    <property type="component" value="Unassembled WGS sequence"/>
</dbReference>
<dbReference type="GO" id="GO:0035267">
    <property type="term" value="C:NuA4 histone acetyltransferase complex"/>
    <property type="evidence" value="ECO:0000250"/>
    <property type="project" value="UniProtKB"/>
</dbReference>
<dbReference type="GO" id="GO:0005634">
    <property type="term" value="C:nucleus"/>
    <property type="evidence" value="ECO:0000250"/>
    <property type="project" value="UniProtKB"/>
</dbReference>
<dbReference type="GO" id="GO:0005524">
    <property type="term" value="F:ATP binding"/>
    <property type="evidence" value="ECO:0007669"/>
    <property type="project" value="UniProtKB-KW"/>
</dbReference>
<dbReference type="GO" id="GO:0016887">
    <property type="term" value="F:ATP hydrolysis activity"/>
    <property type="evidence" value="ECO:0007669"/>
    <property type="project" value="InterPro"/>
</dbReference>
<dbReference type="GO" id="GO:0008094">
    <property type="term" value="F:ATP-dependent activity, acting on DNA"/>
    <property type="evidence" value="ECO:0007669"/>
    <property type="project" value="InterPro"/>
</dbReference>
<dbReference type="GO" id="GO:0004386">
    <property type="term" value="F:helicase activity"/>
    <property type="evidence" value="ECO:0007669"/>
    <property type="project" value="UniProtKB-KW"/>
</dbReference>
<dbReference type="GO" id="GO:0003714">
    <property type="term" value="F:transcription corepressor activity"/>
    <property type="evidence" value="ECO:0000250"/>
    <property type="project" value="UniProtKB"/>
</dbReference>
<dbReference type="GO" id="GO:0006325">
    <property type="term" value="P:chromatin organization"/>
    <property type="evidence" value="ECO:0007669"/>
    <property type="project" value="UniProtKB-KW"/>
</dbReference>
<dbReference type="GO" id="GO:0006281">
    <property type="term" value="P:DNA repair"/>
    <property type="evidence" value="ECO:0007669"/>
    <property type="project" value="UniProtKB-KW"/>
</dbReference>
<dbReference type="GO" id="GO:0090090">
    <property type="term" value="P:negative regulation of canonical Wnt signaling pathway"/>
    <property type="evidence" value="ECO:0000250"/>
    <property type="project" value="UniProtKB"/>
</dbReference>
<dbReference type="GO" id="GO:0042127">
    <property type="term" value="P:regulation of cell population proliferation"/>
    <property type="evidence" value="ECO:0000250"/>
    <property type="project" value="UniProtKB"/>
</dbReference>
<dbReference type="FunFam" id="3.40.50.300:FF:002221">
    <property type="entry name" value="RuvB-like 2"/>
    <property type="match status" value="2"/>
</dbReference>
<dbReference type="FunFam" id="1.10.8.60:FF:000010">
    <property type="entry name" value="RuvB-like helicase"/>
    <property type="match status" value="1"/>
</dbReference>
<dbReference type="FunFam" id="2.40.50.360:FF:000002">
    <property type="entry name" value="RuvB-like helicase"/>
    <property type="match status" value="1"/>
</dbReference>
<dbReference type="Gene3D" id="1.10.8.60">
    <property type="match status" value="1"/>
</dbReference>
<dbReference type="Gene3D" id="3.40.50.300">
    <property type="entry name" value="P-loop containing nucleotide triphosphate hydrolases"/>
    <property type="match status" value="1"/>
</dbReference>
<dbReference type="Gene3D" id="2.40.50.360">
    <property type="entry name" value="RuvB-like helicase, domain II"/>
    <property type="match status" value="1"/>
</dbReference>
<dbReference type="InterPro" id="IPR003593">
    <property type="entry name" value="AAA+_ATPase"/>
</dbReference>
<dbReference type="InterPro" id="IPR027417">
    <property type="entry name" value="P-loop_NTPase"/>
</dbReference>
<dbReference type="InterPro" id="IPR027238">
    <property type="entry name" value="RuvB-like"/>
</dbReference>
<dbReference type="InterPro" id="IPR041048">
    <property type="entry name" value="RuvB-like_C"/>
</dbReference>
<dbReference type="InterPro" id="IPR042487">
    <property type="entry name" value="RuvBL1/2_DNA/RNA_bd_dom"/>
</dbReference>
<dbReference type="InterPro" id="IPR010339">
    <property type="entry name" value="TIP49_P-loop"/>
</dbReference>
<dbReference type="PANTHER" id="PTHR11093">
    <property type="entry name" value="RUVB-RELATED REPTIN AND PONTIN"/>
    <property type="match status" value="1"/>
</dbReference>
<dbReference type="Pfam" id="PF06068">
    <property type="entry name" value="TIP49"/>
    <property type="match status" value="1"/>
</dbReference>
<dbReference type="Pfam" id="PF17856">
    <property type="entry name" value="TIP49_C"/>
    <property type="match status" value="1"/>
</dbReference>
<dbReference type="SMART" id="SM00382">
    <property type="entry name" value="AAA"/>
    <property type="match status" value="1"/>
</dbReference>
<dbReference type="SUPFAM" id="SSF52540">
    <property type="entry name" value="P-loop containing nucleoside triphosphate hydrolases"/>
    <property type="match status" value="1"/>
</dbReference>
<sequence length="465" mass="51850">MAELDKIEVRDITRIERIGAHSHIRGLGLDDVLEARAVSQGMVGQKDARRAAGLVVQIVREGKIAGRCILLAGEPSTGKTAIAVGMAQALGNETPFTSMSGSEIYSLEMNKTEALSQALRKSIGVRIKEETEIIEGEVVEIQIDRPASGTGQKVGKVTIKTTDMETNYDLGNKIIECFMKEKIQAGDVITIDKASGKVSKLGRSFTRARDYDATGAQTRFVQCPEGELQKRKEVVHTVTLHEIDVINSRTHGFLALFAGDTGEIKQEVRDQINSKVMEWREEGKAEINPGVLFIDEAHMLDIECFSFLNRALESDMAPVVIMATNRGITKIRGTNYRSPHGIPIDLLDRMIIIRTVPYSAKEIKEILKIRCEEEDCQINNEALMVLGRIATETSLRYAIQSITTASLVSKRRKAAEITVEDIRKVYSLFLDEKRSSKIMKEYQDEYLFYDDSLSQAEQAMEVETN</sequence>
<accession>Q16TA2</accession>
<proteinExistence type="inferred from homology"/>
<feature type="chain" id="PRO_0000306322" description="RuvB-like helicase 2">
    <location>
        <begin position="1"/>
        <end position="465"/>
    </location>
</feature>
<feature type="binding site" evidence="3">
    <location>
        <begin position="73"/>
        <end position="80"/>
    </location>
    <ligand>
        <name>ATP</name>
        <dbReference type="ChEBI" id="CHEBI:30616"/>
    </ligand>
</feature>
<evidence type="ECO:0000250" key="1"/>
<evidence type="ECO:0000250" key="2">
    <source>
        <dbReference type="UniProtKB" id="Q9V3K3"/>
    </source>
</evidence>
<evidence type="ECO:0000250" key="3">
    <source>
        <dbReference type="UniProtKB" id="Q9Y230"/>
    </source>
</evidence>
<evidence type="ECO:0000305" key="4"/>
<evidence type="ECO:0000312" key="5">
    <source>
        <dbReference type="EMBL" id="EAT37687.1"/>
    </source>
</evidence>
<gene>
    <name evidence="2" type="primary">rept</name>
    <name type="ORF">AAEL010341</name>
</gene>
<name>RUVB2_AEDAE</name>
<reference evidence="5" key="1">
    <citation type="journal article" date="2007" name="Science">
        <title>Genome sequence of Aedes aegypti, a major arbovirus vector.</title>
        <authorList>
            <person name="Nene V."/>
            <person name="Wortman J.R."/>
            <person name="Lawson D."/>
            <person name="Haas B.J."/>
            <person name="Kodira C.D."/>
            <person name="Tu Z.J."/>
            <person name="Loftus B.J."/>
            <person name="Xi Z."/>
            <person name="Megy K."/>
            <person name="Grabherr M."/>
            <person name="Ren Q."/>
            <person name="Zdobnov E.M."/>
            <person name="Lobo N.F."/>
            <person name="Campbell K.S."/>
            <person name="Brown S.E."/>
            <person name="Bonaldo M.F."/>
            <person name="Zhu J."/>
            <person name="Sinkins S.P."/>
            <person name="Hogenkamp D.G."/>
            <person name="Amedeo P."/>
            <person name="Arensburger P."/>
            <person name="Atkinson P.W."/>
            <person name="Bidwell S.L."/>
            <person name="Biedler J."/>
            <person name="Birney E."/>
            <person name="Bruggner R.V."/>
            <person name="Costas J."/>
            <person name="Coy M.R."/>
            <person name="Crabtree J."/>
            <person name="Crawford M."/>
            <person name="DeBruyn B."/>
            <person name="DeCaprio D."/>
            <person name="Eiglmeier K."/>
            <person name="Eisenstadt E."/>
            <person name="El-Dorry H."/>
            <person name="Gelbart W.M."/>
            <person name="Gomes S.L."/>
            <person name="Hammond M."/>
            <person name="Hannick L.I."/>
            <person name="Hogan J.R."/>
            <person name="Holmes M.H."/>
            <person name="Jaffe D."/>
            <person name="Johnston S.J."/>
            <person name="Kennedy R.C."/>
            <person name="Koo H."/>
            <person name="Kravitz S."/>
            <person name="Kriventseva E.V."/>
            <person name="Kulp D."/>
            <person name="Labutti K."/>
            <person name="Lee E."/>
            <person name="Li S."/>
            <person name="Lovin D.D."/>
            <person name="Mao C."/>
            <person name="Mauceli E."/>
            <person name="Menck C.F."/>
            <person name="Miller J.R."/>
            <person name="Montgomery P."/>
            <person name="Mori A."/>
            <person name="Nascimento A.L."/>
            <person name="Naveira H.F."/>
            <person name="Nusbaum C."/>
            <person name="O'Leary S.B."/>
            <person name="Orvis J."/>
            <person name="Pertea M."/>
            <person name="Quesneville H."/>
            <person name="Reidenbach K.R."/>
            <person name="Rogers Y.-H.C."/>
            <person name="Roth C.W."/>
            <person name="Schneider J.R."/>
            <person name="Schatz M."/>
            <person name="Shumway M."/>
            <person name="Stanke M."/>
            <person name="Stinson E.O."/>
            <person name="Tubio J.M.C."/>
            <person name="Vanzee J.P."/>
            <person name="Verjovski-Almeida S."/>
            <person name="Werner D."/>
            <person name="White O.R."/>
            <person name="Wyder S."/>
            <person name="Zeng Q."/>
            <person name="Zhao Q."/>
            <person name="Zhao Y."/>
            <person name="Hill C.A."/>
            <person name="Raikhel A.S."/>
            <person name="Soares M.B."/>
            <person name="Knudson D.L."/>
            <person name="Lee N.H."/>
            <person name="Galagan J."/>
            <person name="Salzberg S.L."/>
            <person name="Paulsen I.T."/>
            <person name="Dimopoulos G."/>
            <person name="Collins F.H."/>
            <person name="Bruce B."/>
            <person name="Fraser-Liggett C.M."/>
            <person name="Severson D.W."/>
        </authorList>
    </citation>
    <scope>NUCLEOTIDE SEQUENCE [LARGE SCALE GENOMIC DNA]</scope>
    <source>
        <strain>LVPib12</strain>
    </source>
</reference>
<organism>
    <name type="scientific">Aedes aegypti</name>
    <name type="common">Yellowfever mosquito</name>
    <name type="synonym">Culex aegypti</name>
    <dbReference type="NCBI Taxonomy" id="7159"/>
    <lineage>
        <taxon>Eukaryota</taxon>
        <taxon>Metazoa</taxon>
        <taxon>Ecdysozoa</taxon>
        <taxon>Arthropoda</taxon>
        <taxon>Hexapoda</taxon>
        <taxon>Insecta</taxon>
        <taxon>Pterygota</taxon>
        <taxon>Neoptera</taxon>
        <taxon>Endopterygota</taxon>
        <taxon>Diptera</taxon>
        <taxon>Nematocera</taxon>
        <taxon>Culicoidea</taxon>
        <taxon>Culicidae</taxon>
        <taxon>Culicinae</taxon>
        <taxon>Aedini</taxon>
        <taxon>Aedes</taxon>
        <taxon>Stegomyia</taxon>
    </lineage>
</organism>
<protein>
    <recommendedName>
        <fullName>RuvB-like helicase 2</fullName>
        <ecNumber>3.6.4.12</ecNumber>
    </recommendedName>
    <alternativeName>
        <fullName>Reptin</fullName>
    </alternativeName>
</protein>